<feature type="chain" id="PRO_1000072129" description="Imidazolonepropionase">
    <location>
        <begin position="1"/>
        <end position="402"/>
    </location>
</feature>
<feature type="binding site" evidence="1">
    <location>
        <position position="66"/>
    </location>
    <ligand>
        <name>Fe(3+)</name>
        <dbReference type="ChEBI" id="CHEBI:29034"/>
    </ligand>
</feature>
<feature type="binding site" evidence="1">
    <location>
        <position position="66"/>
    </location>
    <ligand>
        <name>Zn(2+)</name>
        <dbReference type="ChEBI" id="CHEBI:29105"/>
    </ligand>
</feature>
<feature type="binding site" evidence="1">
    <location>
        <position position="68"/>
    </location>
    <ligand>
        <name>Fe(3+)</name>
        <dbReference type="ChEBI" id="CHEBI:29034"/>
    </ligand>
</feature>
<feature type="binding site" evidence="1">
    <location>
        <position position="68"/>
    </location>
    <ligand>
        <name>Zn(2+)</name>
        <dbReference type="ChEBI" id="CHEBI:29105"/>
    </ligand>
</feature>
<feature type="binding site" evidence="1">
    <location>
        <position position="75"/>
    </location>
    <ligand>
        <name>4-imidazolone-5-propanoate</name>
        <dbReference type="ChEBI" id="CHEBI:77893"/>
    </ligand>
</feature>
<feature type="binding site" evidence="1">
    <location>
        <position position="138"/>
    </location>
    <ligand>
        <name>4-imidazolone-5-propanoate</name>
        <dbReference type="ChEBI" id="CHEBI:77893"/>
    </ligand>
</feature>
<feature type="binding site" evidence="1">
    <location>
        <position position="138"/>
    </location>
    <ligand>
        <name>N-formimidoyl-L-glutamate</name>
        <dbReference type="ChEBI" id="CHEBI:58928"/>
    </ligand>
</feature>
<feature type="binding site" evidence="1">
    <location>
        <position position="171"/>
    </location>
    <ligand>
        <name>4-imidazolone-5-propanoate</name>
        <dbReference type="ChEBI" id="CHEBI:77893"/>
    </ligand>
</feature>
<feature type="binding site" evidence="1">
    <location>
        <position position="236"/>
    </location>
    <ligand>
        <name>Fe(3+)</name>
        <dbReference type="ChEBI" id="CHEBI:29034"/>
    </ligand>
</feature>
<feature type="binding site" evidence="1">
    <location>
        <position position="236"/>
    </location>
    <ligand>
        <name>Zn(2+)</name>
        <dbReference type="ChEBI" id="CHEBI:29105"/>
    </ligand>
</feature>
<feature type="binding site" evidence="1">
    <location>
        <position position="239"/>
    </location>
    <ligand>
        <name>4-imidazolone-5-propanoate</name>
        <dbReference type="ChEBI" id="CHEBI:77893"/>
    </ligand>
</feature>
<feature type="binding site" evidence="1">
    <location>
        <position position="311"/>
    </location>
    <ligand>
        <name>Fe(3+)</name>
        <dbReference type="ChEBI" id="CHEBI:29034"/>
    </ligand>
</feature>
<feature type="binding site" evidence="1">
    <location>
        <position position="311"/>
    </location>
    <ligand>
        <name>Zn(2+)</name>
        <dbReference type="ChEBI" id="CHEBI:29105"/>
    </ligand>
</feature>
<feature type="binding site" evidence="1">
    <location>
        <position position="313"/>
    </location>
    <ligand>
        <name>N-formimidoyl-L-glutamate</name>
        <dbReference type="ChEBI" id="CHEBI:58928"/>
    </ligand>
</feature>
<feature type="binding site" evidence="1">
    <location>
        <position position="315"/>
    </location>
    <ligand>
        <name>N-formimidoyl-L-glutamate</name>
        <dbReference type="ChEBI" id="CHEBI:58928"/>
    </ligand>
</feature>
<feature type="binding site" evidence="1">
    <location>
        <position position="316"/>
    </location>
    <ligand>
        <name>4-imidazolone-5-propanoate</name>
        <dbReference type="ChEBI" id="CHEBI:77893"/>
    </ligand>
</feature>
<sequence>MNCVLTEARLVTMQPGVQGYQITEPQTLIIEQGRIQHIGQHIDLPSDAHPISCAGKLVTPGLIDCHTHLVYAGSRANEFELRLQGVPYQTIAAQGGGILSTVNATRKASEEALIELALPRLDGLLRSGVTSVEVKSGYGLTLKDELKMLRAAKALEQHRRVKITTTLLAAHALPPEFQGRSDDYIAHICQEIIPRVAEEQLATSVDVFCESIGFSVAQTERVFHAAQAHGLQIKGHTEQLSNLGGSALTARMGGLSVDHIEYLDEAGVKALAQSSTVATLLPGAFYFLRETQKPPIEWLRQYRVPMAISTDLNPGTSPFADLSLMMNMGCTLFDLTPEETLRAVTCHAAQALGYPANRGQIAEGYDADLAIWNIEHPAELSYQVGVSRLHARIVNGELSYES</sequence>
<evidence type="ECO:0000255" key="1">
    <source>
        <dbReference type="HAMAP-Rule" id="MF_00372"/>
    </source>
</evidence>
<reference key="1">
    <citation type="submission" date="2007-03" db="EMBL/GenBank/DDBJ databases">
        <authorList>
            <person name="Heidelberg J."/>
        </authorList>
    </citation>
    <scope>NUCLEOTIDE SEQUENCE [LARGE SCALE GENOMIC DNA]</scope>
    <source>
        <strain>ATCC 39541 / Classical Ogawa 395 / O395</strain>
    </source>
</reference>
<reference key="2">
    <citation type="journal article" date="2008" name="PLoS ONE">
        <title>A recalibrated molecular clock and independent origins for the cholera pandemic clones.</title>
        <authorList>
            <person name="Feng L."/>
            <person name="Reeves P.R."/>
            <person name="Lan R."/>
            <person name="Ren Y."/>
            <person name="Gao C."/>
            <person name="Zhou Z."/>
            <person name="Ren Y."/>
            <person name="Cheng J."/>
            <person name="Wang W."/>
            <person name="Wang J."/>
            <person name="Qian W."/>
            <person name="Li D."/>
            <person name="Wang L."/>
        </authorList>
    </citation>
    <scope>NUCLEOTIDE SEQUENCE [LARGE SCALE GENOMIC DNA]</scope>
    <source>
        <strain>ATCC 39541 / Classical Ogawa 395 / O395</strain>
    </source>
</reference>
<dbReference type="EC" id="3.5.2.7" evidence="1"/>
<dbReference type="EMBL" id="CP000627">
    <property type="protein sequence ID" value="ABQ20508.1"/>
    <property type="molecule type" value="Genomic_DNA"/>
</dbReference>
<dbReference type="EMBL" id="CP001235">
    <property type="protein sequence ID" value="ACP09332.1"/>
    <property type="molecule type" value="Genomic_DNA"/>
</dbReference>
<dbReference type="RefSeq" id="WP_000995897.1">
    <property type="nucleotide sequence ID" value="NZ_JAACZH010000002.1"/>
</dbReference>
<dbReference type="SMR" id="A5F1X8"/>
<dbReference type="KEGG" id="vco:VC0395_A0825"/>
<dbReference type="KEGG" id="vcr:VC395_1324"/>
<dbReference type="PATRIC" id="fig|345073.21.peg.1288"/>
<dbReference type="eggNOG" id="COG1228">
    <property type="taxonomic scope" value="Bacteria"/>
</dbReference>
<dbReference type="HOGENOM" id="CLU_041647_0_0_6"/>
<dbReference type="OrthoDB" id="9776455at2"/>
<dbReference type="UniPathway" id="UPA00379">
    <property type="reaction ID" value="UER00551"/>
</dbReference>
<dbReference type="Proteomes" id="UP000000249">
    <property type="component" value="Chromosome 2"/>
</dbReference>
<dbReference type="GO" id="GO:0005737">
    <property type="term" value="C:cytoplasm"/>
    <property type="evidence" value="ECO:0007669"/>
    <property type="project" value="UniProtKB-SubCell"/>
</dbReference>
<dbReference type="GO" id="GO:0050480">
    <property type="term" value="F:imidazolonepropionase activity"/>
    <property type="evidence" value="ECO:0007669"/>
    <property type="project" value="UniProtKB-UniRule"/>
</dbReference>
<dbReference type="GO" id="GO:0005506">
    <property type="term" value="F:iron ion binding"/>
    <property type="evidence" value="ECO:0007669"/>
    <property type="project" value="UniProtKB-UniRule"/>
</dbReference>
<dbReference type="GO" id="GO:0008270">
    <property type="term" value="F:zinc ion binding"/>
    <property type="evidence" value="ECO:0007669"/>
    <property type="project" value="UniProtKB-UniRule"/>
</dbReference>
<dbReference type="GO" id="GO:0019556">
    <property type="term" value="P:L-histidine catabolic process to glutamate and formamide"/>
    <property type="evidence" value="ECO:0007669"/>
    <property type="project" value="UniProtKB-UniPathway"/>
</dbReference>
<dbReference type="GO" id="GO:0019557">
    <property type="term" value="P:L-histidine catabolic process to glutamate and formate"/>
    <property type="evidence" value="ECO:0007669"/>
    <property type="project" value="UniProtKB-UniPathway"/>
</dbReference>
<dbReference type="CDD" id="cd01296">
    <property type="entry name" value="Imidazolone-5PH"/>
    <property type="match status" value="1"/>
</dbReference>
<dbReference type="FunFam" id="3.20.20.140:FF:000007">
    <property type="entry name" value="Imidazolonepropionase"/>
    <property type="match status" value="1"/>
</dbReference>
<dbReference type="Gene3D" id="3.20.20.140">
    <property type="entry name" value="Metal-dependent hydrolases"/>
    <property type="match status" value="1"/>
</dbReference>
<dbReference type="Gene3D" id="2.30.40.10">
    <property type="entry name" value="Urease, subunit C, domain 1"/>
    <property type="match status" value="1"/>
</dbReference>
<dbReference type="HAMAP" id="MF_00372">
    <property type="entry name" value="HutI"/>
    <property type="match status" value="1"/>
</dbReference>
<dbReference type="InterPro" id="IPR006680">
    <property type="entry name" value="Amidohydro-rel"/>
</dbReference>
<dbReference type="InterPro" id="IPR005920">
    <property type="entry name" value="HutI"/>
</dbReference>
<dbReference type="InterPro" id="IPR011059">
    <property type="entry name" value="Metal-dep_hydrolase_composite"/>
</dbReference>
<dbReference type="InterPro" id="IPR032466">
    <property type="entry name" value="Metal_Hydrolase"/>
</dbReference>
<dbReference type="NCBIfam" id="TIGR01224">
    <property type="entry name" value="hutI"/>
    <property type="match status" value="1"/>
</dbReference>
<dbReference type="PANTHER" id="PTHR42752">
    <property type="entry name" value="IMIDAZOLONEPROPIONASE"/>
    <property type="match status" value="1"/>
</dbReference>
<dbReference type="PANTHER" id="PTHR42752:SF1">
    <property type="entry name" value="IMIDAZOLONEPROPIONASE-RELATED"/>
    <property type="match status" value="1"/>
</dbReference>
<dbReference type="Pfam" id="PF01979">
    <property type="entry name" value="Amidohydro_1"/>
    <property type="match status" value="1"/>
</dbReference>
<dbReference type="SUPFAM" id="SSF51338">
    <property type="entry name" value="Composite domain of metallo-dependent hydrolases"/>
    <property type="match status" value="1"/>
</dbReference>
<dbReference type="SUPFAM" id="SSF51556">
    <property type="entry name" value="Metallo-dependent hydrolases"/>
    <property type="match status" value="1"/>
</dbReference>
<organism>
    <name type="scientific">Vibrio cholerae serotype O1 (strain ATCC 39541 / Classical Ogawa 395 / O395)</name>
    <dbReference type="NCBI Taxonomy" id="345073"/>
    <lineage>
        <taxon>Bacteria</taxon>
        <taxon>Pseudomonadati</taxon>
        <taxon>Pseudomonadota</taxon>
        <taxon>Gammaproteobacteria</taxon>
        <taxon>Vibrionales</taxon>
        <taxon>Vibrionaceae</taxon>
        <taxon>Vibrio</taxon>
    </lineage>
</organism>
<protein>
    <recommendedName>
        <fullName evidence="1">Imidazolonepropionase</fullName>
        <ecNumber evidence="1">3.5.2.7</ecNumber>
    </recommendedName>
    <alternativeName>
        <fullName evidence="1">Imidazolone-5-propionate hydrolase</fullName>
    </alternativeName>
</protein>
<keyword id="KW-0963">Cytoplasm</keyword>
<keyword id="KW-0369">Histidine metabolism</keyword>
<keyword id="KW-0378">Hydrolase</keyword>
<keyword id="KW-0408">Iron</keyword>
<keyword id="KW-0479">Metal-binding</keyword>
<keyword id="KW-0862">Zinc</keyword>
<accession>A5F1X8</accession>
<accession>C3LZW6</accession>
<name>HUTI_VIBC3</name>
<comment type="function">
    <text evidence="1">Catalyzes the hydrolytic cleavage of the carbon-nitrogen bond in imidazolone-5-propanoate to yield N-formimidoyl-L-glutamate. It is the third step in the universal histidine degradation pathway.</text>
</comment>
<comment type="catalytic activity">
    <reaction evidence="1">
        <text>4-imidazolone-5-propanoate + H2O = N-formimidoyl-L-glutamate</text>
        <dbReference type="Rhea" id="RHEA:23660"/>
        <dbReference type="ChEBI" id="CHEBI:15377"/>
        <dbReference type="ChEBI" id="CHEBI:58928"/>
        <dbReference type="ChEBI" id="CHEBI:77893"/>
        <dbReference type="EC" id="3.5.2.7"/>
    </reaction>
</comment>
<comment type="cofactor">
    <cofactor evidence="1">
        <name>Zn(2+)</name>
        <dbReference type="ChEBI" id="CHEBI:29105"/>
    </cofactor>
    <cofactor evidence="1">
        <name>Fe(3+)</name>
        <dbReference type="ChEBI" id="CHEBI:29034"/>
    </cofactor>
    <text evidence="1">Binds 1 zinc or iron ion per subunit.</text>
</comment>
<comment type="pathway">
    <text evidence="1">Amino-acid degradation; L-histidine degradation into L-glutamate; N-formimidoyl-L-glutamate from L-histidine: step 3/3.</text>
</comment>
<comment type="subcellular location">
    <subcellularLocation>
        <location evidence="1">Cytoplasm</location>
    </subcellularLocation>
</comment>
<comment type="similarity">
    <text evidence="1">Belongs to the metallo-dependent hydrolases superfamily. HutI family.</text>
</comment>
<proteinExistence type="inferred from homology"/>
<gene>
    <name evidence="1" type="primary">hutI</name>
    <name type="ordered locus">VC0395_A0825</name>
    <name type="ordered locus">VC395_1324</name>
</gene>